<reference key="1">
    <citation type="journal article" date="1997" name="Nature">
        <title>The nucleotide sequence of Saccharomyces cerevisiae chromosome V.</title>
        <authorList>
            <person name="Dietrich F.S."/>
            <person name="Mulligan J.T."/>
            <person name="Hennessy K.M."/>
            <person name="Yelton M.A."/>
            <person name="Allen E."/>
            <person name="Araujo R."/>
            <person name="Aviles E."/>
            <person name="Berno A."/>
            <person name="Brennan T."/>
            <person name="Carpenter J."/>
            <person name="Chen E."/>
            <person name="Cherry J.M."/>
            <person name="Chung E."/>
            <person name="Duncan M."/>
            <person name="Guzman E."/>
            <person name="Hartzell G."/>
            <person name="Hunicke-Smith S."/>
            <person name="Hyman R.W."/>
            <person name="Kayser A."/>
            <person name="Komp C."/>
            <person name="Lashkari D."/>
            <person name="Lew H."/>
            <person name="Lin D."/>
            <person name="Mosedale D."/>
            <person name="Nakahara K."/>
            <person name="Namath A."/>
            <person name="Norgren R."/>
            <person name="Oefner P."/>
            <person name="Oh C."/>
            <person name="Petel F.X."/>
            <person name="Roberts D."/>
            <person name="Sehl P."/>
            <person name="Schramm S."/>
            <person name="Shogren T."/>
            <person name="Smith V."/>
            <person name="Taylor P."/>
            <person name="Wei Y."/>
            <person name="Botstein D."/>
            <person name="Davis R.W."/>
        </authorList>
    </citation>
    <scope>NUCLEOTIDE SEQUENCE [LARGE SCALE GENOMIC DNA]</scope>
    <source>
        <strain>ATCC 204508 / S288c</strain>
    </source>
</reference>
<reference key="2">
    <citation type="journal article" date="2014" name="G3 (Bethesda)">
        <title>The reference genome sequence of Saccharomyces cerevisiae: Then and now.</title>
        <authorList>
            <person name="Engel S.R."/>
            <person name="Dietrich F.S."/>
            <person name="Fisk D.G."/>
            <person name="Binkley G."/>
            <person name="Balakrishnan R."/>
            <person name="Costanzo M.C."/>
            <person name="Dwight S.S."/>
            <person name="Hitz B.C."/>
            <person name="Karra K."/>
            <person name="Nash R.S."/>
            <person name="Weng S."/>
            <person name="Wong E.D."/>
            <person name="Lloyd P."/>
            <person name="Skrzypek M.S."/>
            <person name="Miyasato S.R."/>
            <person name="Simison M."/>
            <person name="Cherry J.M."/>
        </authorList>
    </citation>
    <scope>GENOME REANNOTATION</scope>
    <source>
        <strain>ATCC 204508 / S288c</strain>
    </source>
</reference>
<reference key="3">
    <citation type="journal article" date="2003" name="Nature">
        <title>Sequencing and comparison of yeast species to identify genes and regulatory elements.</title>
        <authorList>
            <person name="Kellis M."/>
            <person name="Patterson N."/>
            <person name="Endrizzi M."/>
            <person name="Birren B.W."/>
            <person name="Lander E.S."/>
        </authorList>
    </citation>
    <scope>IDENTIFICATION OF PROBABLE INITIATION SITE</scope>
</reference>
<reference key="4">
    <citation type="journal article" date="2003" name="Nature">
        <title>Global analysis of protein localization in budding yeast.</title>
        <authorList>
            <person name="Huh W.-K."/>
            <person name="Falvo J.V."/>
            <person name="Gerke L.C."/>
            <person name="Carroll A.S."/>
            <person name="Howson R.W."/>
            <person name="Weissman J.S."/>
            <person name="O'Shea E.K."/>
        </authorList>
    </citation>
    <scope>SUBCELLULAR LOCATION [LARGE SCALE ANALYSIS]</scope>
</reference>
<reference key="5">
    <citation type="journal article" date="2003" name="Nature">
        <title>Global analysis of protein expression in yeast.</title>
        <authorList>
            <person name="Ghaemmaghami S."/>
            <person name="Huh W.-K."/>
            <person name="Bower K."/>
            <person name="Howson R.W."/>
            <person name="Belle A."/>
            <person name="Dephoure N."/>
            <person name="O'Shea E.K."/>
            <person name="Weissman J.S."/>
        </authorList>
    </citation>
    <scope>LEVEL OF PROTEIN EXPRESSION [LARGE SCALE ANALYSIS]</scope>
</reference>
<reference key="6">
    <citation type="journal article" date="2005" name="Nucleic Acids Res.">
        <title>Mapping of transcription start sites in Saccharomyces cerevisiae using 5' SAGE.</title>
        <authorList>
            <person name="Zhang Z."/>
            <person name="Dietrich F.S."/>
        </authorList>
    </citation>
    <scope>IDENTIFICATION OF PROBABLE INITIATION SITE</scope>
</reference>
<reference key="7">
    <citation type="journal article" date="2007" name="Mol. Cell">
        <title>Chz1, a nuclear chaperone for histone H2AZ.</title>
        <authorList>
            <person name="Luk E."/>
            <person name="Vu N.-D."/>
            <person name="Patteson K."/>
            <person name="Mizuguchi G."/>
            <person name="Wu W.-H."/>
            <person name="Ranjan A."/>
            <person name="Backus J."/>
            <person name="Sen S."/>
            <person name="Lewis M."/>
            <person name="Bai Y."/>
            <person name="Wu C."/>
        </authorList>
    </citation>
    <scope>FUNCTION</scope>
    <scope>SUBCELLULAR LOCATION</scope>
    <scope>SUBUNIT</scope>
</reference>
<reference key="8">
    <citation type="journal article" date="2008" name="Mol. Cell. Proteomics">
        <title>A multidimensional chromatography technology for in-depth phosphoproteome analysis.</title>
        <authorList>
            <person name="Albuquerque C.P."/>
            <person name="Smolka M.B."/>
            <person name="Payne S.H."/>
            <person name="Bafna V."/>
            <person name="Eng J."/>
            <person name="Zhou H."/>
        </authorList>
    </citation>
    <scope>PHOSPHORYLATION [LARGE SCALE ANALYSIS] AT SER-68 AND SER-70</scope>
    <scope>IDENTIFICATION BY MASS SPECTROMETRY [LARGE SCALE ANALYSIS]</scope>
</reference>
<reference key="9">
    <citation type="journal article" date="2009" name="Science">
        <title>Global analysis of Cdk1 substrate phosphorylation sites provides insights into evolution.</title>
        <authorList>
            <person name="Holt L.J."/>
            <person name="Tuch B.B."/>
            <person name="Villen J."/>
            <person name="Johnson A.D."/>
            <person name="Gygi S.P."/>
            <person name="Morgan D.O."/>
        </authorList>
    </citation>
    <scope>PHOSPHORYLATION [LARGE SCALE ANALYSIS] AT SER-68 AND SER-70</scope>
    <scope>IDENTIFICATION BY MASS SPECTROMETRY [LARGE SCALE ANALYSIS]</scope>
</reference>
<reference key="10">
    <citation type="journal article" date="2012" name="Proc. Natl. Acad. Sci. U.S.A.">
        <title>N-terminal acetylome analyses and functional insights of the N-terminal acetyltransferase NatB.</title>
        <authorList>
            <person name="Van Damme P."/>
            <person name="Lasa M."/>
            <person name="Polevoda B."/>
            <person name="Gazquez C."/>
            <person name="Elosegui-Artola A."/>
            <person name="Kim D.S."/>
            <person name="De Juan-Pardo E."/>
            <person name="Demeyer K."/>
            <person name="Hole K."/>
            <person name="Larrea E."/>
            <person name="Timmerman E."/>
            <person name="Prieto J."/>
            <person name="Arnesen T."/>
            <person name="Sherman F."/>
            <person name="Gevaert K."/>
            <person name="Aldabe R."/>
        </authorList>
    </citation>
    <scope>ACETYLATION [LARGE SCALE ANALYSIS] AT SER-2</scope>
    <scope>CLEAVAGE OF INITIATOR METHIONINE [LARGE SCALE ANALYSIS]</scope>
    <scope>IDENTIFICATION BY MASS SPECTROMETRY [LARGE SCALE ANALYSIS]</scope>
</reference>
<dbReference type="EMBL" id="U18778">
    <property type="protein sequence ID" value="AAB64563.1"/>
    <property type="status" value="ALT_INIT"/>
    <property type="molecule type" value="Genomic_DNA"/>
</dbReference>
<dbReference type="EMBL" id="BK006939">
    <property type="protein sequence ID" value="DAA07683.1"/>
    <property type="molecule type" value="Genomic_DNA"/>
</dbReference>
<dbReference type="PIR" id="S50488">
    <property type="entry name" value="S50488"/>
</dbReference>
<dbReference type="RefSeq" id="NP_010947.2">
    <property type="nucleotide sequence ID" value="NM_001178921.1"/>
</dbReference>
<dbReference type="PDB" id="2JSS">
    <property type="method" value="NMR"/>
    <property type="chains" value="B=64-125"/>
</dbReference>
<dbReference type="PDB" id="6AE8">
    <property type="method" value="X-ray"/>
    <property type="resolution" value="1.65 A"/>
    <property type="chains" value="C/D=64-153"/>
</dbReference>
<dbReference type="PDB" id="8QZ0">
    <property type="method" value="EM"/>
    <property type="resolution" value="3.80 A"/>
    <property type="chains" value="K=1-153"/>
</dbReference>
<dbReference type="PDBsum" id="2JSS"/>
<dbReference type="PDBsum" id="6AE8"/>
<dbReference type="PDBsum" id="8QZ0"/>
<dbReference type="BMRB" id="P40019"/>
<dbReference type="EMDB" id="EMD-18769"/>
<dbReference type="SMR" id="P40019"/>
<dbReference type="BioGRID" id="36765">
    <property type="interactions" value="64"/>
</dbReference>
<dbReference type="DIP" id="DIP-6361N"/>
<dbReference type="FunCoup" id="P40019">
    <property type="interactions" value="61"/>
</dbReference>
<dbReference type="IntAct" id="P40019">
    <property type="interactions" value="6"/>
</dbReference>
<dbReference type="MINT" id="P40019"/>
<dbReference type="STRING" id="4932.YER030W"/>
<dbReference type="iPTMnet" id="P40019"/>
<dbReference type="PaxDb" id="4932-YER030W"/>
<dbReference type="PeptideAtlas" id="P40019"/>
<dbReference type="EnsemblFungi" id="YER030W_mRNA">
    <property type="protein sequence ID" value="YER030W"/>
    <property type="gene ID" value="YER030W"/>
</dbReference>
<dbReference type="GeneID" id="856752"/>
<dbReference type="KEGG" id="sce:YER030W"/>
<dbReference type="AGR" id="SGD:S000000832"/>
<dbReference type="SGD" id="S000000832">
    <property type="gene designation" value="CHZ1"/>
</dbReference>
<dbReference type="VEuPathDB" id="FungiDB:YER030W"/>
<dbReference type="eggNOG" id="ENOG502SCUM">
    <property type="taxonomic scope" value="Eukaryota"/>
</dbReference>
<dbReference type="HOGENOM" id="CLU_126134_1_0_1"/>
<dbReference type="InParanoid" id="P40019"/>
<dbReference type="OMA" id="RTHYDDE"/>
<dbReference type="OrthoDB" id="4174291at2759"/>
<dbReference type="BioCyc" id="YEAST:G3O-30211-MONOMER"/>
<dbReference type="BioGRID-ORCS" id="856752">
    <property type="hits" value="1 hit in 10 CRISPR screens"/>
</dbReference>
<dbReference type="EvolutionaryTrace" id="P40019"/>
<dbReference type="PRO" id="PR:P40019"/>
<dbReference type="Proteomes" id="UP000002311">
    <property type="component" value="Chromosome V"/>
</dbReference>
<dbReference type="RNAct" id="P40019">
    <property type="molecule type" value="protein"/>
</dbReference>
<dbReference type="GO" id="GO:0005634">
    <property type="term" value="C:nucleus"/>
    <property type="evidence" value="ECO:0000314"/>
    <property type="project" value="SGD"/>
</dbReference>
<dbReference type="GO" id="GO:0042393">
    <property type="term" value="F:histone binding"/>
    <property type="evidence" value="ECO:0000353"/>
    <property type="project" value="SGD"/>
</dbReference>
<dbReference type="GO" id="GO:0006338">
    <property type="term" value="P:chromatin remodeling"/>
    <property type="evidence" value="ECO:0000353"/>
    <property type="project" value="SGD"/>
</dbReference>
<dbReference type="DisProt" id="DP01135"/>
<dbReference type="IDEAL" id="IID50210"/>
<dbReference type="InterPro" id="IPR019098">
    <property type="entry name" value="Histone_chaperone_domain_CHZ"/>
</dbReference>
<dbReference type="Pfam" id="PF09649">
    <property type="entry name" value="CHZ"/>
    <property type="match status" value="1"/>
</dbReference>
<dbReference type="SMART" id="SM01082">
    <property type="entry name" value="CHZ"/>
    <property type="match status" value="1"/>
</dbReference>
<feature type="initiator methionine" description="Removed" evidence="8">
    <location>
        <position position="1"/>
    </location>
</feature>
<feature type="chain" id="PRO_0000202623" description="Histone H2A.Z-specific chaperone CHZ1">
    <location>
        <begin position="2"/>
        <end position="153"/>
    </location>
</feature>
<feature type="region of interest" description="Disordered" evidence="1">
    <location>
        <begin position="1"/>
        <end position="153"/>
    </location>
</feature>
<feature type="region of interest" description="Important for H2A.Z-H2B binding">
    <location>
        <begin position="87"/>
        <end position="108"/>
    </location>
</feature>
<feature type="compositionally biased region" description="Basic and acidic residues" evidence="1">
    <location>
        <begin position="1"/>
        <end position="29"/>
    </location>
</feature>
<feature type="compositionally biased region" description="Polar residues" evidence="1">
    <location>
        <begin position="56"/>
        <end position="65"/>
    </location>
</feature>
<feature type="compositionally biased region" description="Acidic residues" evidence="1">
    <location>
        <begin position="84"/>
        <end position="94"/>
    </location>
</feature>
<feature type="compositionally biased region" description="Basic and acidic residues" evidence="1">
    <location>
        <begin position="110"/>
        <end position="138"/>
    </location>
</feature>
<feature type="compositionally biased region" description="Acidic residues" evidence="1">
    <location>
        <begin position="139"/>
        <end position="153"/>
    </location>
</feature>
<feature type="modified residue" description="N-acetylserine" evidence="8">
    <location>
        <position position="2"/>
    </location>
</feature>
<feature type="modified residue" description="Phosphoserine" evidence="6 7">
    <location>
        <position position="68"/>
    </location>
</feature>
<feature type="modified residue" description="Phosphoserine" evidence="6 7">
    <location>
        <position position="70"/>
    </location>
</feature>
<feature type="helix" evidence="9">
    <location>
        <begin position="75"/>
        <end position="79"/>
    </location>
</feature>
<feature type="helix" evidence="9">
    <location>
        <begin position="86"/>
        <end position="89"/>
    </location>
</feature>
<feature type="helix" evidence="9">
    <location>
        <begin position="97"/>
        <end position="99"/>
    </location>
</feature>
<feature type="turn" evidence="9">
    <location>
        <begin position="113"/>
        <end position="115"/>
    </location>
</feature>
<feature type="helix" evidence="9">
    <location>
        <begin position="116"/>
        <end position="123"/>
    </location>
</feature>
<feature type="helix" evidence="10">
    <location>
        <begin position="143"/>
        <end position="145"/>
    </location>
</feature>
<proteinExistence type="evidence at protein level"/>
<name>CHZ1_YEAST</name>
<gene>
    <name type="primary">CHZ1</name>
    <name type="ordered locus">YER030W</name>
</gene>
<protein>
    <recommendedName>
        <fullName>Histone H2A.Z-specific chaperone CHZ1</fullName>
    </recommendedName>
</protein>
<organism>
    <name type="scientific">Saccharomyces cerevisiae (strain ATCC 204508 / S288c)</name>
    <name type="common">Baker's yeast</name>
    <dbReference type="NCBI Taxonomy" id="559292"/>
    <lineage>
        <taxon>Eukaryota</taxon>
        <taxon>Fungi</taxon>
        <taxon>Dikarya</taxon>
        <taxon>Ascomycota</taxon>
        <taxon>Saccharomycotina</taxon>
        <taxon>Saccharomycetes</taxon>
        <taxon>Saccharomycetales</taxon>
        <taxon>Saccharomycetaceae</taxon>
        <taxon>Saccharomyces</taxon>
    </lineage>
</organism>
<accession>P40019</accession>
<accession>D3DLS9</accession>
<evidence type="ECO:0000256" key="1">
    <source>
        <dbReference type="SAM" id="MobiDB-lite"/>
    </source>
</evidence>
<evidence type="ECO:0000269" key="2">
    <source>
    </source>
</evidence>
<evidence type="ECO:0000269" key="3">
    <source>
    </source>
</evidence>
<evidence type="ECO:0000269" key="4">
    <source>
    </source>
</evidence>
<evidence type="ECO:0000305" key="5"/>
<evidence type="ECO:0007744" key="6">
    <source>
    </source>
</evidence>
<evidence type="ECO:0007744" key="7">
    <source>
    </source>
</evidence>
<evidence type="ECO:0007744" key="8">
    <source>
    </source>
</evidence>
<evidence type="ECO:0007829" key="9">
    <source>
        <dbReference type="PDB" id="2JSS"/>
    </source>
</evidence>
<evidence type="ECO:0007829" key="10">
    <source>
        <dbReference type="PDB" id="6AE8"/>
    </source>
</evidence>
<comment type="function">
    <text evidence="4">Forms a chaperone-bound H2A.Z-H2B complex that acts as a source for SWR1 complex-dependent H2A to H2A.Z histone replacement in chromatin.</text>
</comment>
<comment type="subunit">
    <text evidence="4">Forms a heterotrimer with H2A.Z-H2B, stabilizing the association of the histone dimer. Also, with a lower affinity, forms a heterotrimer with H2A-H2B.</text>
</comment>
<comment type="subcellular location">
    <subcellularLocation>
        <location evidence="2 4">Nucleus</location>
    </subcellularLocation>
</comment>
<comment type="miscellaneous">
    <text evidence="3">Present with 623 molecules/cell in log phase SD medium.</text>
</comment>
<comment type="similarity">
    <text evidence="5">Belongs to the CHZ1 family.</text>
</comment>
<comment type="sequence caution" evidence="5">
    <conflict type="erroneous initiation">
        <sequence resource="EMBL-CDS" id="AAB64563"/>
    </conflict>
</comment>
<keyword id="KW-0002">3D-structure</keyword>
<keyword id="KW-0007">Acetylation</keyword>
<keyword id="KW-0143">Chaperone</keyword>
<keyword id="KW-0539">Nucleus</keyword>
<keyword id="KW-0597">Phosphoprotein</keyword>
<keyword id="KW-1185">Reference proteome</keyword>
<sequence>MSDEAKEKRELESQKESSHNKSEKSVEPKPKRRRRRNYDDYDAEVAKEETKAKNGLTKSENNGTVEDSESDMDDAKLDALMGNEGEEEEDDLAEIDTSNIITSGRRTRGKVIDYKKTAEELDKKEPSTGSKDDVGYGEKEEDDEDEEDDDFKE</sequence>